<gene>
    <name type="ordered locus">BAA_3454</name>
</gene>
<sequence length="182" mass="20457">MLQALLIFVLQIIYVPILTIRTILLVKNQTRSAAAVGLLEGAIYIVSLGIVFQDLSNWMNIVAYVIGFSAGLLLGGYIENKLAIGYITYQVSLLDRCNELVDELRHSGFGVTVFEGEGINSIRYRLDIVAKRSREKELLEIINEIAPKAFMSSYEIRSFKGGYLTKAMKKRALMKKKDHHVS</sequence>
<accession>C3P314</accession>
<evidence type="ECO:0000255" key="1">
    <source>
        <dbReference type="HAMAP-Rule" id="MF_01515"/>
    </source>
</evidence>
<comment type="subcellular location">
    <subcellularLocation>
        <location evidence="1">Cell membrane</location>
        <topology evidence="1">Multi-pass membrane protein</topology>
    </subcellularLocation>
</comment>
<comment type="similarity">
    <text evidence="1">Belongs to the UPF0316 family.</text>
</comment>
<dbReference type="EMBL" id="CP001598">
    <property type="protein sequence ID" value="ACQ48401.1"/>
    <property type="molecule type" value="Genomic_DNA"/>
</dbReference>
<dbReference type="RefSeq" id="WP_000938435.1">
    <property type="nucleotide sequence ID" value="NC_012659.1"/>
</dbReference>
<dbReference type="SMR" id="C3P314"/>
<dbReference type="GeneID" id="45023171"/>
<dbReference type="KEGG" id="bai:BAA_3454"/>
<dbReference type="HOGENOM" id="CLU_106166_1_1_9"/>
<dbReference type="GO" id="GO:0005886">
    <property type="term" value="C:plasma membrane"/>
    <property type="evidence" value="ECO:0007669"/>
    <property type="project" value="UniProtKB-SubCell"/>
</dbReference>
<dbReference type="CDD" id="cd16381">
    <property type="entry name" value="YitT_C_like_1"/>
    <property type="match status" value="1"/>
</dbReference>
<dbReference type="HAMAP" id="MF_01515">
    <property type="entry name" value="UPF0316"/>
    <property type="match status" value="1"/>
</dbReference>
<dbReference type="InterPro" id="IPR019264">
    <property type="entry name" value="DUF2179"/>
</dbReference>
<dbReference type="InterPro" id="IPR044035">
    <property type="entry name" value="DUF5698"/>
</dbReference>
<dbReference type="InterPro" id="IPR022930">
    <property type="entry name" value="UPF0316"/>
</dbReference>
<dbReference type="NCBIfam" id="NF003193">
    <property type="entry name" value="PRK04164.1-4"/>
    <property type="match status" value="1"/>
</dbReference>
<dbReference type="NCBIfam" id="NF003194">
    <property type="entry name" value="PRK04164.1-5"/>
    <property type="match status" value="1"/>
</dbReference>
<dbReference type="PANTHER" id="PTHR40060">
    <property type="entry name" value="UPF0316 PROTEIN YEBE"/>
    <property type="match status" value="1"/>
</dbReference>
<dbReference type="PANTHER" id="PTHR40060:SF1">
    <property type="entry name" value="UPF0316 PROTEIN YEBE"/>
    <property type="match status" value="1"/>
</dbReference>
<dbReference type="Pfam" id="PF10035">
    <property type="entry name" value="DUF2179"/>
    <property type="match status" value="1"/>
</dbReference>
<dbReference type="Pfam" id="PF18955">
    <property type="entry name" value="DUF5698"/>
    <property type="match status" value="1"/>
</dbReference>
<proteinExistence type="inferred from homology"/>
<reference key="1">
    <citation type="submission" date="2009-04" db="EMBL/GenBank/DDBJ databases">
        <title>Genome sequence of Bacillus anthracis A0248.</title>
        <authorList>
            <person name="Dodson R.J."/>
            <person name="Munk A.C."/>
            <person name="Bruce D."/>
            <person name="Detter C."/>
            <person name="Tapia R."/>
            <person name="Sutton G."/>
            <person name="Sims D."/>
            <person name="Brettin T."/>
        </authorList>
    </citation>
    <scope>NUCLEOTIDE SEQUENCE [LARGE SCALE GENOMIC DNA]</scope>
    <source>
        <strain>A0248</strain>
    </source>
</reference>
<name>Y3454_BACAA</name>
<keyword id="KW-1003">Cell membrane</keyword>
<keyword id="KW-0472">Membrane</keyword>
<keyword id="KW-0812">Transmembrane</keyword>
<keyword id="KW-1133">Transmembrane helix</keyword>
<protein>
    <recommendedName>
        <fullName evidence="1">UPF0316 protein BAA_3454</fullName>
    </recommendedName>
</protein>
<organism>
    <name type="scientific">Bacillus anthracis (strain A0248)</name>
    <dbReference type="NCBI Taxonomy" id="592021"/>
    <lineage>
        <taxon>Bacteria</taxon>
        <taxon>Bacillati</taxon>
        <taxon>Bacillota</taxon>
        <taxon>Bacilli</taxon>
        <taxon>Bacillales</taxon>
        <taxon>Bacillaceae</taxon>
        <taxon>Bacillus</taxon>
        <taxon>Bacillus cereus group</taxon>
    </lineage>
</organism>
<feature type="chain" id="PRO_1000185067" description="UPF0316 protein BAA_3454">
    <location>
        <begin position="1"/>
        <end position="182"/>
    </location>
</feature>
<feature type="transmembrane region" description="Helical" evidence="1">
    <location>
        <begin position="6"/>
        <end position="26"/>
    </location>
</feature>
<feature type="transmembrane region" description="Helical" evidence="1">
    <location>
        <begin position="32"/>
        <end position="52"/>
    </location>
</feature>
<feature type="transmembrane region" description="Helical" evidence="1">
    <location>
        <begin position="58"/>
        <end position="78"/>
    </location>
</feature>